<protein>
    <recommendedName>
        <fullName>Diphthamide biosynthesis protein 3</fullName>
    </recommendedName>
</protein>
<comment type="function">
    <text evidence="2">Required for the first step of diphthamide biosynthesis, a post-translational modification of histidine which occurs in elongation factor 2. DPH1 and DPH2 transfer a 3-amino-3-carboxypropyl (ACP) group from S-adenosyl-L-methionine (SAM) to a histidine residue, the reaction is assisted by a reduction system comprising KTI11/DPH3 and a NADH-dependent reductase, predominantly CBR1. Acts as an electron donor to reduce the Fe-S cluster in DPH1-DPH2 keeping the [4Fe-4S] clusters in the active and reduced state. Restores iron to DPH1-DPH2 iron-sulfur clusters which have degraded from [4Fe-4S] to [3Fe-4S] by donating an iron atom to reform [4Fe-4S] clusters, in a manner dependent on the presence of elongation factor 2 and SAM. Associates with the elongator complex and is required for tRNA Wobble base modifications mediated by the elongator complex. The elongator complex is required for multiple tRNA modifications, including mcm5U (5-methoxycarbonylmethyl uridine), mcm5s 2U (5-methoxycarbonylmethyl-2-thiouridine), and ncm5U (5-carbamoylmethyl uridine).</text>
</comment>
<comment type="catalytic activity">
    <reaction evidence="2">
        <text>[3Fe-4S](1+)-[protein] + Fe(2+)-[Dph3] = [3Fe-4S](0)-[protein] + Fe(3+)-[Dph3]</text>
        <dbReference type="Rhea" id="RHEA:71235"/>
        <dbReference type="Rhea" id="RHEA-COMP:17996"/>
        <dbReference type="Rhea" id="RHEA-COMP:17997"/>
        <dbReference type="Rhea" id="RHEA-COMP:18002"/>
        <dbReference type="Rhea" id="RHEA-COMP:18003"/>
        <dbReference type="ChEBI" id="CHEBI:29033"/>
        <dbReference type="ChEBI" id="CHEBI:29034"/>
        <dbReference type="ChEBI" id="CHEBI:33751"/>
        <dbReference type="ChEBI" id="CHEBI:47402"/>
        <dbReference type="ChEBI" id="CHEBI:83228"/>
    </reaction>
</comment>
<comment type="catalytic activity">
    <reaction evidence="2">
        <text>2 [3Fe-4S](0)-[protein] + 2 Fe(2+)-[Dph3] + NADH = 2 [4Fe-4S](1+)-[protein] + 2 [Dph3] + NAD(+) + H(+)</text>
        <dbReference type="Rhea" id="RHEA:71239"/>
        <dbReference type="Rhea" id="RHEA-COMP:17997"/>
        <dbReference type="Rhea" id="RHEA-COMP:17998"/>
        <dbReference type="Rhea" id="RHEA-COMP:18001"/>
        <dbReference type="Rhea" id="RHEA-COMP:18002"/>
        <dbReference type="ChEBI" id="CHEBI:15378"/>
        <dbReference type="ChEBI" id="CHEBI:29033"/>
        <dbReference type="ChEBI" id="CHEBI:33723"/>
        <dbReference type="ChEBI" id="CHEBI:47402"/>
        <dbReference type="ChEBI" id="CHEBI:57540"/>
        <dbReference type="ChEBI" id="CHEBI:57945"/>
        <dbReference type="ChEBI" id="CHEBI:83228"/>
    </reaction>
</comment>
<comment type="cofactor">
    <cofactor evidence="2">
        <name>Fe(2+)</name>
        <dbReference type="ChEBI" id="CHEBI:29033"/>
    </cofactor>
</comment>
<comment type="pathway">
    <text evidence="2">Protein modification; peptidyl-diphthamide biosynthesis.</text>
</comment>
<comment type="subunit">
    <text evidence="2">Component of the 2-(3-amino-3-carboxypropyl)histidine synthase complex composed of DPH1, DPH2, DPH3 and a NADH-dependent reductase, predominantly CBR1.</text>
</comment>
<comment type="subcellular location">
    <subcellularLocation>
        <location evidence="1">Cytoplasm</location>
    </subcellularLocation>
    <subcellularLocation>
        <location evidence="1">Nucleus</location>
    </subcellularLocation>
</comment>
<comment type="domain">
    <text evidence="2">The DPH-type metal-binding (MB) domain can also bind zinc. However, iron is the physiological binding partner as zinc binding impairs the protein electron donor function.</text>
</comment>
<comment type="similarity">
    <text evidence="5">Belongs to the DPH3 family.</text>
</comment>
<dbReference type="EMBL" id="AAEY01000002">
    <property type="protein sequence ID" value="EAL23247.1"/>
    <property type="molecule type" value="Genomic_DNA"/>
</dbReference>
<dbReference type="RefSeq" id="XP_777894.1">
    <property type="nucleotide sequence ID" value="XM_772801.1"/>
</dbReference>
<dbReference type="SMR" id="P0CN23"/>
<dbReference type="EnsemblFungi" id="AAW40902">
    <property type="protein sequence ID" value="AAW40902"/>
    <property type="gene ID" value="CNA03820"/>
</dbReference>
<dbReference type="GeneID" id="4933621"/>
<dbReference type="KEGG" id="cnb:CNBA3630"/>
<dbReference type="VEuPathDB" id="FungiDB:CNBA3630"/>
<dbReference type="HOGENOM" id="CLU_1713169_0_0_1"/>
<dbReference type="OrthoDB" id="1243at5206"/>
<dbReference type="UniPathway" id="UPA00559"/>
<dbReference type="GO" id="GO:0005737">
    <property type="term" value="C:cytoplasm"/>
    <property type="evidence" value="ECO:0007669"/>
    <property type="project" value="UniProtKB-SubCell"/>
</dbReference>
<dbReference type="GO" id="GO:0005634">
    <property type="term" value="C:nucleus"/>
    <property type="evidence" value="ECO:0007669"/>
    <property type="project" value="UniProtKB-SubCell"/>
</dbReference>
<dbReference type="GO" id="GO:0008198">
    <property type="term" value="F:ferrous iron binding"/>
    <property type="evidence" value="ECO:0000250"/>
    <property type="project" value="UniProtKB"/>
</dbReference>
<dbReference type="GO" id="GO:0034986">
    <property type="term" value="F:iron chaperone activity"/>
    <property type="evidence" value="ECO:0000250"/>
    <property type="project" value="UniProtKB"/>
</dbReference>
<dbReference type="GO" id="GO:0016491">
    <property type="term" value="F:oxidoreductase activity"/>
    <property type="evidence" value="ECO:0007669"/>
    <property type="project" value="UniProtKB-KW"/>
</dbReference>
<dbReference type="GO" id="GO:0017183">
    <property type="term" value="P:protein histidyl modification to diphthamide"/>
    <property type="evidence" value="ECO:0000250"/>
    <property type="project" value="UniProtKB"/>
</dbReference>
<dbReference type="GO" id="GO:0002926">
    <property type="term" value="P:tRNA wobble base 5-methoxycarbonylmethyl-2-thiouridinylation"/>
    <property type="evidence" value="ECO:0000250"/>
    <property type="project" value="UniProtKB"/>
</dbReference>
<dbReference type="FunFam" id="3.10.660.10:FF:000001">
    <property type="entry name" value="Diphthamide biosynthesis 3"/>
    <property type="match status" value="1"/>
</dbReference>
<dbReference type="Gene3D" id="3.10.660.10">
    <property type="entry name" value="DPH Zinc finger"/>
    <property type="match status" value="1"/>
</dbReference>
<dbReference type="InterPro" id="IPR044248">
    <property type="entry name" value="DPH3/4-like"/>
</dbReference>
<dbReference type="InterPro" id="IPR007872">
    <property type="entry name" value="DPH_MB_dom"/>
</dbReference>
<dbReference type="InterPro" id="IPR036671">
    <property type="entry name" value="DPH_MB_sf"/>
</dbReference>
<dbReference type="PANTHER" id="PTHR21454:SF31">
    <property type="entry name" value="DIPHTHAMIDE BIOSYNTHESIS PROTEIN 3"/>
    <property type="match status" value="1"/>
</dbReference>
<dbReference type="PANTHER" id="PTHR21454">
    <property type="entry name" value="DPH3 HOMOLOG-RELATED"/>
    <property type="match status" value="1"/>
</dbReference>
<dbReference type="Pfam" id="PF05207">
    <property type="entry name" value="Zn_ribbon_CSL"/>
    <property type="match status" value="1"/>
</dbReference>
<dbReference type="SUPFAM" id="SSF144217">
    <property type="entry name" value="CSL zinc finger"/>
    <property type="match status" value="1"/>
</dbReference>
<dbReference type="PROSITE" id="PS51074">
    <property type="entry name" value="DPH_MB"/>
    <property type="match status" value="1"/>
</dbReference>
<reference key="1">
    <citation type="journal article" date="2005" name="Science">
        <title>The genome of the basidiomycetous yeast and human pathogen Cryptococcus neoformans.</title>
        <authorList>
            <person name="Loftus B.J."/>
            <person name="Fung E."/>
            <person name="Roncaglia P."/>
            <person name="Rowley D."/>
            <person name="Amedeo P."/>
            <person name="Bruno D."/>
            <person name="Vamathevan J."/>
            <person name="Miranda M."/>
            <person name="Anderson I.J."/>
            <person name="Fraser J.A."/>
            <person name="Allen J.E."/>
            <person name="Bosdet I.E."/>
            <person name="Brent M.R."/>
            <person name="Chiu R."/>
            <person name="Doering T.L."/>
            <person name="Donlin M.J."/>
            <person name="D'Souza C.A."/>
            <person name="Fox D.S."/>
            <person name="Grinberg V."/>
            <person name="Fu J."/>
            <person name="Fukushima M."/>
            <person name="Haas B.J."/>
            <person name="Huang J.C."/>
            <person name="Janbon G."/>
            <person name="Jones S.J.M."/>
            <person name="Koo H.L."/>
            <person name="Krzywinski M.I."/>
            <person name="Kwon-Chung K.J."/>
            <person name="Lengeler K.B."/>
            <person name="Maiti R."/>
            <person name="Marra M.A."/>
            <person name="Marra R.E."/>
            <person name="Mathewson C.A."/>
            <person name="Mitchell T.G."/>
            <person name="Pertea M."/>
            <person name="Riggs F.R."/>
            <person name="Salzberg S.L."/>
            <person name="Schein J.E."/>
            <person name="Shvartsbeyn A."/>
            <person name="Shin H."/>
            <person name="Shumway M."/>
            <person name="Specht C.A."/>
            <person name="Suh B.B."/>
            <person name="Tenney A."/>
            <person name="Utterback T.R."/>
            <person name="Wickes B.L."/>
            <person name="Wortman J.R."/>
            <person name="Wye N.H."/>
            <person name="Kronstad J.W."/>
            <person name="Lodge J.K."/>
            <person name="Heitman J."/>
            <person name="Davis R.W."/>
            <person name="Fraser C.M."/>
            <person name="Hyman R.W."/>
        </authorList>
    </citation>
    <scope>NUCLEOTIDE SEQUENCE [LARGE SCALE GENOMIC DNA]</scope>
    <source>
        <strain>B-3501A</strain>
    </source>
</reference>
<gene>
    <name type="primary">DPH3</name>
    <name type="ordered locus">CNBA3630</name>
</gene>
<evidence type="ECO:0000250" key="1"/>
<evidence type="ECO:0000250" key="2">
    <source>
        <dbReference type="UniProtKB" id="Q3E840"/>
    </source>
</evidence>
<evidence type="ECO:0000255" key="3">
    <source>
        <dbReference type="PROSITE-ProRule" id="PRU00456"/>
    </source>
</evidence>
<evidence type="ECO:0000256" key="4">
    <source>
        <dbReference type="SAM" id="MobiDB-lite"/>
    </source>
</evidence>
<evidence type="ECO:0000305" key="5"/>
<name>DPH3_CRYNB</name>
<keyword id="KW-0963">Cytoplasm</keyword>
<keyword id="KW-0408">Iron</keyword>
<keyword id="KW-0479">Metal-binding</keyword>
<keyword id="KW-0539">Nucleus</keyword>
<keyword id="KW-0560">Oxidoreductase</keyword>
<organism>
    <name type="scientific">Cryptococcus neoformans var. neoformans serotype D (strain B-3501A)</name>
    <name type="common">Filobasidiella neoformans</name>
    <dbReference type="NCBI Taxonomy" id="283643"/>
    <lineage>
        <taxon>Eukaryota</taxon>
        <taxon>Fungi</taxon>
        <taxon>Dikarya</taxon>
        <taxon>Basidiomycota</taxon>
        <taxon>Agaricomycotina</taxon>
        <taxon>Tremellomycetes</taxon>
        <taxon>Tremellales</taxon>
        <taxon>Cryptococcaceae</taxon>
        <taxon>Cryptococcus</taxon>
        <taxon>Cryptococcus neoformans species complex</taxon>
    </lineage>
</organism>
<sequence length="153" mass="16987">MPNYYDELEIEDFAWDPVARVFHYPCPCGDRFEISKGQLRDGEEIAICPSCSLIVRVIYDYLDWEDYVTTDDEDDGGSVDTPLSNTSPDPAYPVVVGSAEVESQSKTASSAVSSQKEECTSLSDRLAGLQVESGKEDDPVQEHKREDSSDVLH</sequence>
<accession>P0CN23</accession>
<accession>Q55ZX7</accession>
<accession>Q5KP86</accession>
<proteinExistence type="inferred from homology"/>
<feature type="chain" id="PRO_0000410065" description="Diphthamide biosynthesis protein 3">
    <location>
        <begin position="1"/>
        <end position="153"/>
    </location>
</feature>
<feature type="domain" description="DPH-type MB" evidence="3">
    <location>
        <begin position="4"/>
        <end position="60"/>
    </location>
</feature>
<feature type="region of interest" description="Disordered" evidence="4">
    <location>
        <begin position="69"/>
        <end position="153"/>
    </location>
</feature>
<feature type="compositionally biased region" description="Low complexity" evidence="4">
    <location>
        <begin position="104"/>
        <end position="114"/>
    </location>
</feature>
<feature type="compositionally biased region" description="Basic and acidic residues" evidence="4">
    <location>
        <begin position="133"/>
        <end position="153"/>
    </location>
</feature>
<feature type="binding site" evidence="2">
    <location>
        <position position="26"/>
    </location>
    <ligand>
        <name>Fe cation</name>
        <dbReference type="ChEBI" id="CHEBI:24875"/>
    </ligand>
</feature>
<feature type="binding site" evidence="2">
    <location>
        <position position="28"/>
    </location>
    <ligand>
        <name>Fe cation</name>
        <dbReference type="ChEBI" id="CHEBI:24875"/>
    </ligand>
</feature>
<feature type="binding site" evidence="2">
    <location>
        <position position="48"/>
    </location>
    <ligand>
        <name>Fe cation</name>
        <dbReference type="ChEBI" id="CHEBI:24875"/>
    </ligand>
</feature>
<feature type="binding site" evidence="2">
    <location>
        <position position="51"/>
    </location>
    <ligand>
        <name>Fe cation</name>
        <dbReference type="ChEBI" id="CHEBI:24875"/>
    </ligand>
</feature>